<gene>
    <name evidence="1" type="primary">purM</name>
    <name type="ordered locus">YPDSF_2178</name>
</gene>
<feature type="chain" id="PRO_1000046484" description="Phosphoribosylformylglycinamidine cyclo-ligase">
    <location>
        <begin position="1"/>
        <end position="347"/>
    </location>
</feature>
<dbReference type="EC" id="6.3.3.1" evidence="1"/>
<dbReference type="EMBL" id="CP000668">
    <property type="protein sequence ID" value="ABP40555.1"/>
    <property type="molecule type" value="Genomic_DNA"/>
</dbReference>
<dbReference type="RefSeq" id="WP_002209777.1">
    <property type="nucleotide sequence ID" value="NZ_CP009715.1"/>
</dbReference>
<dbReference type="SMR" id="A4TMP3"/>
<dbReference type="GeneID" id="57975788"/>
<dbReference type="KEGG" id="ypp:YPDSF_2178"/>
<dbReference type="PATRIC" id="fig|386656.14.peg.3658"/>
<dbReference type="UniPathway" id="UPA00074">
    <property type="reaction ID" value="UER00129"/>
</dbReference>
<dbReference type="GO" id="GO:0005829">
    <property type="term" value="C:cytosol"/>
    <property type="evidence" value="ECO:0007669"/>
    <property type="project" value="TreeGrafter"/>
</dbReference>
<dbReference type="GO" id="GO:0005524">
    <property type="term" value="F:ATP binding"/>
    <property type="evidence" value="ECO:0007669"/>
    <property type="project" value="UniProtKB-KW"/>
</dbReference>
<dbReference type="GO" id="GO:0004637">
    <property type="term" value="F:phosphoribosylamine-glycine ligase activity"/>
    <property type="evidence" value="ECO:0007669"/>
    <property type="project" value="TreeGrafter"/>
</dbReference>
<dbReference type="GO" id="GO:0004641">
    <property type="term" value="F:phosphoribosylformylglycinamidine cyclo-ligase activity"/>
    <property type="evidence" value="ECO:0007669"/>
    <property type="project" value="UniProtKB-UniRule"/>
</dbReference>
<dbReference type="GO" id="GO:0006189">
    <property type="term" value="P:'de novo' IMP biosynthetic process"/>
    <property type="evidence" value="ECO:0007669"/>
    <property type="project" value="UniProtKB-UniRule"/>
</dbReference>
<dbReference type="GO" id="GO:0046084">
    <property type="term" value="P:adenine biosynthetic process"/>
    <property type="evidence" value="ECO:0007669"/>
    <property type="project" value="TreeGrafter"/>
</dbReference>
<dbReference type="CDD" id="cd02196">
    <property type="entry name" value="PurM"/>
    <property type="match status" value="1"/>
</dbReference>
<dbReference type="FunFam" id="3.30.1330.10:FF:000001">
    <property type="entry name" value="Phosphoribosylformylglycinamidine cyclo-ligase"/>
    <property type="match status" value="1"/>
</dbReference>
<dbReference type="FunFam" id="3.90.650.10:FF:000001">
    <property type="entry name" value="Phosphoribosylformylglycinamidine cyclo-ligase"/>
    <property type="match status" value="1"/>
</dbReference>
<dbReference type="Gene3D" id="3.90.650.10">
    <property type="entry name" value="PurM-like C-terminal domain"/>
    <property type="match status" value="1"/>
</dbReference>
<dbReference type="Gene3D" id="3.30.1330.10">
    <property type="entry name" value="PurM-like, N-terminal domain"/>
    <property type="match status" value="1"/>
</dbReference>
<dbReference type="HAMAP" id="MF_00741">
    <property type="entry name" value="AIRS"/>
    <property type="match status" value="1"/>
</dbReference>
<dbReference type="InterPro" id="IPR010918">
    <property type="entry name" value="PurM-like_C_dom"/>
</dbReference>
<dbReference type="InterPro" id="IPR036676">
    <property type="entry name" value="PurM-like_C_sf"/>
</dbReference>
<dbReference type="InterPro" id="IPR016188">
    <property type="entry name" value="PurM-like_N"/>
</dbReference>
<dbReference type="InterPro" id="IPR036921">
    <property type="entry name" value="PurM-like_N_sf"/>
</dbReference>
<dbReference type="InterPro" id="IPR004733">
    <property type="entry name" value="PurM_cligase"/>
</dbReference>
<dbReference type="NCBIfam" id="TIGR00878">
    <property type="entry name" value="purM"/>
    <property type="match status" value="1"/>
</dbReference>
<dbReference type="PANTHER" id="PTHR10520:SF12">
    <property type="entry name" value="TRIFUNCTIONAL PURINE BIOSYNTHETIC PROTEIN ADENOSINE-3"/>
    <property type="match status" value="1"/>
</dbReference>
<dbReference type="PANTHER" id="PTHR10520">
    <property type="entry name" value="TRIFUNCTIONAL PURINE BIOSYNTHETIC PROTEIN ADENOSINE-3-RELATED"/>
    <property type="match status" value="1"/>
</dbReference>
<dbReference type="Pfam" id="PF00586">
    <property type="entry name" value="AIRS"/>
    <property type="match status" value="1"/>
</dbReference>
<dbReference type="Pfam" id="PF02769">
    <property type="entry name" value="AIRS_C"/>
    <property type="match status" value="1"/>
</dbReference>
<dbReference type="SUPFAM" id="SSF56042">
    <property type="entry name" value="PurM C-terminal domain-like"/>
    <property type="match status" value="1"/>
</dbReference>
<dbReference type="SUPFAM" id="SSF55326">
    <property type="entry name" value="PurM N-terminal domain-like"/>
    <property type="match status" value="1"/>
</dbReference>
<evidence type="ECO:0000255" key="1">
    <source>
        <dbReference type="HAMAP-Rule" id="MF_00741"/>
    </source>
</evidence>
<comment type="catalytic activity">
    <reaction evidence="1">
        <text>2-formamido-N(1)-(5-O-phospho-beta-D-ribosyl)acetamidine + ATP = 5-amino-1-(5-phospho-beta-D-ribosyl)imidazole + ADP + phosphate + H(+)</text>
        <dbReference type="Rhea" id="RHEA:23032"/>
        <dbReference type="ChEBI" id="CHEBI:15378"/>
        <dbReference type="ChEBI" id="CHEBI:30616"/>
        <dbReference type="ChEBI" id="CHEBI:43474"/>
        <dbReference type="ChEBI" id="CHEBI:137981"/>
        <dbReference type="ChEBI" id="CHEBI:147287"/>
        <dbReference type="ChEBI" id="CHEBI:456216"/>
        <dbReference type="EC" id="6.3.3.1"/>
    </reaction>
</comment>
<comment type="pathway">
    <text evidence="1">Purine metabolism; IMP biosynthesis via de novo pathway; 5-amino-1-(5-phospho-D-ribosyl)imidazole from N(2)-formyl-N(1)-(5-phospho-D-ribosyl)glycinamide: step 2/2.</text>
</comment>
<comment type="subcellular location">
    <subcellularLocation>
        <location evidence="1">Cytoplasm</location>
    </subcellularLocation>
</comment>
<comment type="similarity">
    <text evidence="1">Belongs to the AIR synthase family.</text>
</comment>
<organism>
    <name type="scientific">Yersinia pestis (strain Pestoides F)</name>
    <dbReference type="NCBI Taxonomy" id="386656"/>
    <lineage>
        <taxon>Bacteria</taxon>
        <taxon>Pseudomonadati</taxon>
        <taxon>Pseudomonadota</taxon>
        <taxon>Gammaproteobacteria</taxon>
        <taxon>Enterobacterales</taxon>
        <taxon>Yersiniaceae</taxon>
        <taxon>Yersinia</taxon>
    </lineage>
</organism>
<name>PUR5_YERPP</name>
<keyword id="KW-0067">ATP-binding</keyword>
<keyword id="KW-0963">Cytoplasm</keyword>
<keyword id="KW-0436">Ligase</keyword>
<keyword id="KW-0547">Nucleotide-binding</keyword>
<keyword id="KW-0658">Purine biosynthesis</keyword>
<sequence length="347" mass="36854">MTNKTSLSYKDAGVDIDAGNDLVDRIKGVVKQTRRPEVMGGLGGFGALCALPQKYREPILVSGTDGVGTKLRLAMDLKRHDTIGIDLVAMCVNDLVVQGAEPLFFLDYFATGKLDVDTAASVITGIAEGCKQSGCALVGGETAEMPGMYHGDDYDVAGFCVGVVEKSEIIDGSKVTPGDVLVALGASGPHSNGYSLVRKILDVSNTNPEQTSLEGKSLADHLLEPTKIYVKSILSLIEQLDIHAIAHLTGGGFWENIPRVLPQGMQAVIDEASWQWPAVFSWLQQAGNVSRHEMYRTFNCGVGMVVALPAELADKAVELLTASGEKAWKIGVIAAATEGAEQVIINP</sequence>
<protein>
    <recommendedName>
        <fullName evidence="1">Phosphoribosylformylglycinamidine cyclo-ligase</fullName>
        <ecNumber evidence="1">6.3.3.1</ecNumber>
    </recommendedName>
    <alternativeName>
        <fullName evidence="1">AIR synthase</fullName>
    </alternativeName>
    <alternativeName>
        <fullName evidence="1">AIRS</fullName>
    </alternativeName>
    <alternativeName>
        <fullName evidence="1">Phosphoribosyl-aminoimidazole synthetase</fullName>
    </alternativeName>
</protein>
<accession>A4TMP3</accession>
<reference key="1">
    <citation type="submission" date="2007-02" db="EMBL/GenBank/DDBJ databases">
        <title>Complete sequence of chromosome of Yersinia pestis Pestoides F.</title>
        <authorList>
            <consortium name="US DOE Joint Genome Institute"/>
            <person name="Copeland A."/>
            <person name="Lucas S."/>
            <person name="Lapidus A."/>
            <person name="Barry K."/>
            <person name="Detter J.C."/>
            <person name="Glavina del Rio T."/>
            <person name="Hammon N."/>
            <person name="Israni S."/>
            <person name="Dalin E."/>
            <person name="Tice H."/>
            <person name="Pitluck S."/>
            <person name="Di Bartolo G."/>
            <person name="Chain P."/>
            <person name="Malfatti S."/>
            <person name="Shin M."/>
            <person name="Vergez L."/>
            <person name="Schmutz J."/>
            <person name="Larimer F."/>
            <person name="Land M."/>
            <person name="Hauser L."/>
            <person name="Worsham P."/>
            <person name="Chu M."/>
            <person name="Bearden S."/>
            <person name="Garcia E."/>
            <person name="Richardson P."/>
        </authorList>
    </citation>
    <scope>NUCLEOTIDE SEQUENCE [LARGE SCALE GENOMIC DNA]</scope>
    <source>
        <strain>Pestoides F</strain>
    </source>
</reference>
<proteinExistence type="inferred from homology"/>